<name>APC2_DICDI</name>
<reference key="1">
    <citation type="journal article" date="2002" name="Nature">
        <title>Sequence and analysis of chromosome 2 of Dictyostelium discoideum.</title>
        <authorList>
            <person name="Gloeckner G."/>
            <person name="Eichinger L."/>
            <person name="Szafranski K."/>
            <person name="Pachebat J.A."/>
            <person name="Bankier A.T."/>
            <person name="Dear P.H."/>
            <person name="Lehmann R."/>
            <person name="Baumgart C."/>
            <person name="Parra G."/>
            <person name="Abril J.F."/>
            <person name="Guigo R."/>
            <person name="Kumpf K."/>
            <person name="Tunggal B."/>
            <person name="Cox E.C."/>
            <person name="Quail M.A."/>
            <person name="Platzer M."/>
            <person name="Rosenthal A."/>
            <person name="Noegel A.A."/>
        </authorList>
    </citation>
    <scope>NUCLEOTIDE SEQUENCE [LARGE SCALE GENOMIC DNA]</scope>
    <source>
        <strain>AX4</strain>
    </source>
</reference>
<reference key="2">
    <citation type="journal article" date="2005" name="Nature">
        <title>The genome of the social amoeba Dictyostelium discoideum.</title>
        <authorList>
            <person name="Eichinger L."/>
            <person name="Pachebat J.A."/>
            <person name="Gloeckner G."/>
            <person name="Rajandream M.A."/>
            <person name="Sucgang R."/>
            <person name="Berriman M."/>
            <person name="Song J."/>
            <person name="Olsen R."/>
            <person name="Szafranski K."/>
            <person name="Xu Q."/>
            <person name="Tunggal B."/>
            <person name="Kummerfeld S."/>
            <person name="Madera M."/>
            <person name="Konfortov B.A."/>
            <person name="Rivero F."/>
            <person name="Bankier A.T."/>
            <person name="Lehmann R."/>
            <person name="Hamlin N."/>
            <person name="Davies R."/>
            <person name="Gaudet P."/>
            <person name="Fey P."/>
            <person name="Pilcher K."/>
            <person name="Chen G."/>
            <person name="Saunders D."/>
            <person name="Sodergren E.J."/>
            <person name="Davis P."/>
            <person name="Kerhornou A."/>
            <person name="Nie X."/>
            <person name="Hall N."/>
            <person name="Anjard C."/>
            <person name="Hemphill L."/>
            <person name="Bason N."/>
            <person name="Farbrother P."/>
            <person name="Desany B."/>
            <person name="Just E."/>
            <person name="Morio T."/>
            <person name="Rost R."/>
            <person name="Churcher C.M."/>
            <person name="Cooper J."/>
            <person name="Haydock S."/>
            <person name="van Driessche N."/>
            <person name="Cronin A."/>
            <person name="Goodhead I."/>
            <person name="Muzny D.M."/>
            <person name="Mourier T."/>
            <person name="Pain A."/>
            <person name="Lu M."/>
            <person name="Harper D."/>
            <person name="Lindsay R."/>
            <person name="Hauser H."/>
            <person name="James K.D."/>
            <person name="Quiles M."/>
            <person name="Madan Babu M."/>
            <person name="Saito T."/>
            <person name="Buchrieser C."/>
            <person name="Wardroper A."/>
            <person name="Felder M."/>
            <person name="Thangavelu M."/>
            <person name="Johnson D."/>
            <person name="Knights A."/>
            <person name="Loulseged H."/>
            <person name="Mungall K.L."/>
            <person name="Oliver K."/>
            <person name="Price C."/>
            <person name="Quail M.A."/>
            <person name="Urushihara H."/>
            <person name="Hernandez J."/>
            <person name="Rabbinowitsch E."/>
            <person name="Steffen D."/>
            <person name="Sanders M."/>
            <person name="Ma J."/>
            <person name="Kohara Y."/>
            <person name="Sharp S."/>
            <person name="Simmonds M.N."/>
            <person name="Spiegler S."/>
            <person name="Tivey A."/>
            <person name="Sugano S."/>
            <person name="White B."/>
            <person name="Walker D."/>
            <person name="Woodward J.R."/>
            <person name="Winckler T."/>
            <person name="Tanaka Y."/>
            <person name="Shaulsky G."/>
            <person name="Schleicher M."/>
            <person name="Weinstock G.M."/>
            <person name="Rosenthal A."/>
            <person name="Cox E.C."/>
            <person name="Chisholm R.L."/>
            <person name="Gibbs R.A."/>
            <person name="Loomis W.F."/>
            <person name="Platzer M."/>
            <person name="Kay R.R."/>
            <person name="Williams J.G."/>
            <person name="Dear P.H."/>
            <person name="Noegel A.A."/>
            <person name="Barrell B.G."/>
            <person name="Kuspa A."/>
        </authorList>
    </citation>
    <scope>NUCLEOTIDE SEQUENCE [LARGE SCALE GENOMIC DNA]</scope>
    <source>
        <strain>AX4</strain>
    </source>
</reference>
<feature type="chain" id="PRO_0000328276" description="Anaphase-promoting complex subunit 2">
    <location>
        <begin position="1"/>
        <end position="907"/>
    </location>
</feature>
<feature type="region of interest" description="Disordered" evidence="3">
    <location>
        <begin position="203"/>
        <end position="228"/>
    </location>
</feature>
<feature type="region of interest" description="Disordered" evidence="3">
    <location>
        <begin position="790"/>
        <end position="838"/>
    </location>
</feature>
<feature type="compositionally biased region" description="Acidic residues" evidence="3">
    <location>
        <begin position="214"/>
        <end position="226"/>
    </location>
</feature>
<feature type="compositionally biased region" description="Acidic residues" evidence="3">
    <location>
        <begin position="804"/>
        <end position="830"/>
    </location>
</feature>
<keyword id="KW-0131">Cell cycle</keyword>
<keyword id="KW-0132">Cell division</keyword>
<keyword id="KW-0498">Mitosis</keyword>
<keyword id="KW-0539">Nucleus</keyword>
<keyword id="KW-1185">Reference proteome</keyword>
<keyword id="KW-0833">Ubl conjugation pathway</keyword>
<dbReference type="EMBL" id="AAFI02000014">
    <property type="protein sequence ID" value="EAL69269.1"/>
    <property type="molecule type" value="Genomic_DNA"/>
</dbReference>
<dbReference type="RefSeq" id="XP_643183.1">
    <property type="nucleotide sequence ID" value="XM_638091.1"/>
</dbReference>
<dbReference type="SMR" id="Q551S9"/>
<dbReference type="FunCoup" id="Q551S9">
    <property type="interactions" value="656"/>
</dbReference>
<dbReference type="STRING" id="44689.Q551S9"/>
<dbReference type="PaxDb" id="44689-DDB0234264"/>
<dbReference type="EnsemblProtists" id="EAL69269">
    <property type="protein sequence ID" value="EAL69269"/>
    <property type="gene ID" value="DDB_G0276377"/>
</dbReference>
<dbReference type="GeneID" id="8620454"/>
<dbReference type="KEGG" id="ddi:DDB_G0276377"/>
<dbReference type="dictyBase" id="DDB_G0276377">
    <property type="gene designation" value="anapc2"/>
</dbReference>
<dbReference type="VEuPathDB" id="AmoebaDB:DDB_G0276377"/>
<dbReference type="eggNOG" id="KOG2165">
    <property type="taxonomic scope" value="Eukaryota"/>
</dbReference>
<dbReference type="HOGENOM" id="CLU_007149_2_0_1"/>
<dbReference type="InParanoid" id="Q551S9"/>
<dbReference type="OMA" id="FNTILFM"/>
<dbReference type="PhylomeDB" id="Q551S9"/>
<dbReference type="Reactome" id="R-DDI-141430">
    <property type="pathway name" value="Inactivation of APC/C via direct inhibition of the APC/C complex"/>
</dbReference>
<dbReference type="Reactome" id="R-DDI-174048">
    <property type="pathway name" value="APC/C:Cdc20 mediated degradation of Cyclin B"/>
</dbReference>
<dbReference type="Reactome" id="R-DDI-174084">
    <property type="pathway name" value="Autodegradation of Cdh1 by Cdh1:APC/C"/>
</dbReference>
<dbReference type="Reactome" id="R-DDI-174154">
    <property type="pathway name" value="APC/C:Cdc20 mediated degradation of Securin"/>
</dbReference>
<dbReference type="Reactome" id="R-DDI-174178">
    <property type="pathway name" value="APC/C:Cdh1 mediated degradation of Cdc20 and other APC/C:Cdh1 targeted proteins in late mitosis/early G1"/>
</dbReference>
<dbReference type="Reactome" id="R-DDI-174184">
    <property type="pathway name" value="Cdc20:Phospho-APC/C mediated degradation of Cyclin A"/>
</dbReference>
<dbReference type="Reactome" id="R-DDI-176407">
    <property type="pathway name" value="Conversion from APC/C:Cdc20 to APC/C:Cdh1 in late anaphase"/>
</dbReference>
<dbReference type="Reactome" id="R-DDI-176408">
    <property type="pathway name" value="Regulation of APC/C activators between G1/S and early anaphase"/>
</dbReference>
<dbReference type="Reactome" id="R-DDI-176409">
    <property type="pathway name" value="APC/C:Cdc20 mediated degradation of mitotic proteins"/>
</dbReference>
<dbReference type="Reactome" id="R-DDI-176412">
    <property type="pathway name" value="Phosphorylation of the APC/C"/>
</dbReference>
<dbReference type="Reactome" id="R-DDI-179409">
    <property type="pathway name" value="APC-Cdc20 mediated degradation of Nek2A"/>
</dbReference>
<dbReference type="Reactome" id="R-DDI-2467813">
    <property type="pathway name" value="Separation of Sister Chromatids"/>
</dbReference>
<dbReference type="Reactome" id="R-DDI-2559582">
    <property type="pathway name" value="Senescence-Associated Secretory Phenotype (SASP)"/>
</dbReference>
<dbReference type="Reactome" id="R-DDI-69017">
    <property type="pathway name" value="CDK-mediated phosphorylation and removal of Cdc6"/>
</dbReference>
<dbReference type="Reactome" id="R-DDI-983168">
    <property type="pathway name" value="Antigen processing: Ubiquitination &amp; Proteasome degradation"/>
</dbReference>
<dbReference type="UniPathway" id="UPA00143"/>
<dbReference type="PRO" id="PR:Q551S9"/>
<dbReference type="Proteomes" id="UP000002195">
    <property type="component" value="Chromosome 2"/>
</dbReference>
<dbReference type="GO" id="GO:0005680">
    <property type="term" value="C:anaphase-promoting complex"/>
    <property type="evidence" value="ECO:0000250"/>
    <property type="project" value="dictyBase"/>
</dbReference>
<dbReference type="GO" id="GO:0005829">
    <property type="term" value="C:cytosol"/>
    <property type="evidence" value="ECO:0000250"/>
    <property type="project" value="dictyBase"/>
</dbReference>
<dbReference type="GO" id="GO:0005634">
    <property type="term" value="C:nucleus"/>
    <property type="evidence" value="ECO:0000250"/>
    <property type="project" value="dictyBase"/>
</dbReference>
<dbReference type="GO" id="GO:0031625">
    <property type="term" value="F:ubiquitin protein ligase binding"/>
    <property type="evidence" value="ECO:0007669"/>
    <property type="project" value="InterPro"/>
</dbReference>
<dbReference type="GO" id="GO:0031145">
    <property type="term" value="P:anaphase-promoting complex-dependent catabolic process"/>
    <property type="evidence" value="ECO:0000305"/>
    <property type="project" value="dictyBase"/>
</dbReference>
<dbReference type="GO" id="GO:0051301">
    <property type="term" value="P:cell division"/>
    <property type="evidence" value="ECO:0007669"/>
    <property type="project" value="UniProtKB-KW"/>
</dbReference>
<dbReference type="GO" id="GO:0007091">
    <property type="term" value="P:metaphase/anaphase transition of mitotic cell cycle"/>
    <property type="evidence" value="ECO:0000318"/>
    <property type="project" value="GO_Central"/>
</dbReference>
<dbReference type="GO" id="GO:0070979">
    <property type="term" value="P:protein K11-linked ubiquitination"/>
    <property type="evidence" value="ECO:0000318"/>
    <property type="project" value="GO_Central"/>
</dbReference>
<dbReference type="GO" id="GO:0016567">
    <property type="term" value="P:protein ubiquitination"/>
    <property type="evidence" value="ECO:0000305"/>
    <property type="project" value="dictyBase"/>
</dbReference>
<dbReference type="FunFam" id="1.10.10.10:FF:001237">
    <property type="entry name" value="Anaphase-promoting complex subunit 2"/>
    <property type="match status" value="1"/>
</dbReference>
<dbReference type="FunFam" id="3.30.230.130:FF:000051">
    <property type="entry name" value="Anaphase-promoting complex subunit 2"/>
    <property type="match status" value="1"/>
</dbReference>
<dbReference type="Gene3D" id="1.20.1310.10">
    <property type="entry name" value="Cullin Repeats"/>
    <property type="match status" value="1"/>
</dbReference>
<dbReference type="Gene3D" id="3.30.230.130">
    <property type="entry name" value="Cullin, Chain C, Domain 2"/>
    <property type="match status" value="1"/>
</dbReference>
<dbReference type="Gene3D" id="1.10.10.10">
    <property type="entry name" value="Winged helix-like DNA-binding domain superfamily/Winged helix DNA-binding domain"/>
    <property type="match status" value="1"/>
</dbReference>
<dbReference type="InterPro" id="IPR044554">
    <property type="entry name" value="APC2-like"/>
</dbReference>
<dbReference type="InterPro" id="IPR014786">
    <property type="entry name" value="APC2_C"/>
</dbReference>
<dbReference type="InterPro" id="IPR016158">
    <property type="entry name" value="Cullin_homology"/>
</dbReference>
<dbReference type="InterPro" id="IPR036317">
    <property type="entry name" value="Cullin_homology_sf"/>
</dbReference>
<dbReference type="InterPro" id="IPR001373">
    <property type="entry name" value="Cullin_N"/>
</dbReference>
<dbReference type="InterPro" id="IPR036388">
    <property type="entry name" value="WH-like_DNA-bd_sf"/>
</dbReference>
<dbReference type="InterPro" id="IPR036390">
    <property type="entry name" value="WH_DNA-bd_sf"/>
</dbReference>
<dbReference type="PANTHER" id="PTHR45957">
    <property type="entry name" value="ANAPHASE-PROMOTING COMPLEX SUBUNIT 2"/>
    <property type="match status" value="1"/>
</dbReference>
<dbReference type="PANTHER" id="PTHR45957:SF1">
    <property type="entry name" value="ANAPHASE-PROMOTING COMPLEX SUBUNIT 2"/>
    <property type="match status" value="1"/>
</dbReference>
<dbReference type="Pfam" id="PF08672">
    <property type="entry name" value="ANAPC2"/>
    <property type="match status" value="1"/>
</dbReference>
<dbReference type="Pfam" id="PF00888">
    <property type="entry name" value="Cullin"/>
    <property type="match status" value="1"/>
</dbReference>
<dbReference type="SMART" id="SM01013">
    <property type="entry name" value="APC2"/>
    <property type="match status" value="1"/>
</dbReference>
<dbReference type="SMART" id="SM00182">
    <property type="entry name" value="CULLIN"/>
    <property type="match status" value="1"/>
</dbReference>
<dbReference type="SUPFAM" id="SSF75632">
    <property type="entry name" value="Cullin homology domain"/>
    <property type="match status" value="1"/>
</dbReference>
<dbReference type="SUPFAM" id="SSF46785">
    <property type="entry name" value="Winged helix' DNA-binding domain"/>
    <property type="match status" value="1"/>
</dbReference>
<dbReference type="PROSITE" id="PS50069">
    <property type="entry name" value="CULLIN_2"/>
    <property type="match status" value="1"/>
</dbReference>
<accession>Q551S9</accession>
<accession>Q8T129</accession>
<sequence length="907" mass="107067">MFQNKEQTESILVWEKIVSIFSIPSQNEILNFKQKSPNNIDNNLKQLFNFVKLYKLESLVLDWYFESIKKYFKSTLSNEFWKFFNNVNLAELDSSTTSGRQLKFINHQFALSINLLHKVFSFFKSNLFLFYELLFKKESYNFNFLIKKLQDLLITNIMHTTNQQTKYFNTILFMFFERDFISFTKSFYHSKKQILKDEEENNNNSKDLEFNDQQQEEEEEEEENEEESKSYIIMEMSFEDSITDINIKEDSFMDLCKKLQDLNFIVISEEIFTQILFKKVFEYIETRCKGVFEKSFLKSILEWADQVIFKWLAMILLSSTTTTKINNYNDIINNNDDDNDDDDDDENKENSLKIFNQWKKRLEFSIYENYSQQRISELFDMIVQYPDSLPSLEDLSICFQKIPIEKTMITNLKRVLHNRLLHPGANTSDIITQYISTIHAMDIIDPSGMVMEKVGKPIREYLSQREDTIRCIISSFTEESNEIYQELCNYDPQDNGGDDDSNNSLLAFGNCDLYVDEGDNFSSIDDFKFWIPNKIDGSSTTISIGNAKANNNNKKKKKKDTISHLVNIYDGIDLFINEYRSMLSDRLLSVVDFDLDKEIKNIELLKLRFGDSVLFNCEIMIKDMVDSKRLNLQIKNSQGVNNNNNNNNNNNNELKEFETLILSQLFWPTLKGDEFKYPKSIEKKMQIYSKEYERIKTPRQLIWKQHLGLVDLDLEIGNNIQSFQVSPIHATLIMLFESDDGDDDDEKELTLEYLSKQLEISKDLVKKKLIFWLNNQIIKETSHETYKINNKEKEEQKQRQQQIENDDQDESSSDDDDDDNNIVVEEEEEEKSTSAKEKEEQMRVVESFIIGMLINFKTLPLERIHSMLTMFNSELYTSTIHELKAFLSKLVNEEKIELVGNDFKIKK</sequence>
<organism>
    <name type="scientific">Dictyostelium discoideum</name>
    <name type="common">Social amoeba</name>
    <dbReference type="NCBI Taxonomy" id="44689"/>
    <lineage>
        <taxon>Eukaryota</taxon>
        <taxon>Amoebozoa</taxon>
        <taxon>Evosea</taxon>
        <taxon>Eumycetozoa</taxon>
        <taxon>Dictyostelia</taxon>
        <taxon>Dictyosteliales</taxon>
        <taxon>Dictyosteliaceae</taxon>
        <taxon>Dictyostelium</taxon>
    </lineage>
</organism>
<evidence type="ECO:0000250" key="1"/>
<evidence type="ECO:0000255" key="2">
    <source>
        <dbReference type="PROSITE-ProRule" id="PRU00330"/>
    </source>
</evidence>
<evidence type="ECO:0000256" key="3">
    <source>
        <dbReference type="SAM" id="MobiDB-lite"/>
    </source>
</evidence>
<proteinExistence type="inferred from homology"/>
<gene>
    <name type="primary">anapc2</name>
    <name type="synonym">apc2</name>
    <name type="ORF">DDB_G0276377</name>
</gene>
<comment type="function">
    <text evidence="1">Component of the anaphase promoting complex/cyclosome (APC/C), a cell cycle-regulated E3 ubiquitin-protein ligase complex that controls progression through mitosis and the G1 phase of the cell cycle.</text>
</comment>
<comment type="pathway">
    <text>Protein modification; protein ubiquitination.</text>
</comment>
<comment type="subunit">
    <text evidence="1">The APC/C is composed of at least 13 subunits that stay tightly associated throughout the cell cycle: anapc1, anapc2, anapc3, anapc4, anapc5, anapc6, anapc7, anapc8, anapc10, anapc11, cdc20, cdc26 and cdh1.</text>
</comment>
<comment type="subcellular location">
    <subcellularLocation>
        <location evidence="1">Nucleus</location>
    </subcellularLocation>
</comment>
<comment type="similarity">
    <text evidence="2">Belongs to the cullin family.</text>
</comment>
<protein>
    <recommendedName>
        <fullName>Anaphase-promoting complex subunit 2</fullName>
    </recommendedName>
</protein>